<comment type="function">
    <text evidence="1">Methylates ribosomal protein L11.</text>
</comment>
<comment type="catalytic activity">
    <reaction evidence="1">
        <text>L-lysyl-[protein] + 3 S-adenosyl-L-methionine = N(6),N(6),N(6)-trimethyl-L-lysyl-[protein] + 3 S-adenosyl-L-homocysteine + 3 H(+)</text>
        <dbReference type="Rhea" id="RHEA:54192"/>
        <dbReference type="Rhea" id="RHEA-COMP:9752"/>
        <dbReference type="Rhea" id="RHEA-COMP:13826"/>
        <dbReference type="ChEBI" id="CHEBI:15378"/>
        <dbReference type="ChEBI" id="CHEBI:29969"/>
        <dbReference type="ChEBI" id="CHEBI:57856"/>
        <dbReference type="ChEBI" id="CHEBI:59789"/>
        <dbReference type="ChEBI" id="CHEBI:61961"/>
    </reaction>
</comment>
<comment type="subcellular location">
    <subcellularLocation>
        <location evidence="1">Cytoplasm</location>
    </subcellularLocation>
</comment>
<comment type="similarity">
    <text evidence="1">Belongs to the methyltransferase superfamily. PrmA family.</text>
</comment>
<dbReference type="EC" id="2.1.1.-" evidence="1"/>
<dbReference type="EMBL" id="AM747720">
    <property type="protein sequence ID" value="CAR53745.1"/>
    <property type="molecule type" value="Genomic_DNA"/>
</dbReference>
<dbReference type="RefSeq" id="WP_006490720.1">
    <property type="nucleotide sequence ID" value="NC_011000.1"/>
</dbReference>
<dbReference type="SMR" id="B4E5V2"/>
<dbReference type="KEGG" id="bcj:BCAL3422"/>
<dbReference type="eggNOG" id="COG2264">
    <property type="taxonomic scope" value="Bacteria"/>
</dbReference>
<dbReference type="HOGENOM" id="CLU_049382_4_1_4"/>
<dbReference type="BioCyc" id="BCEN216591:G1G1V-3802-MONOMER"/>
<dbReference type="Proteomes" id="UP000001035">
    <property type="component" value="Chromosome 1"/>
</dbReference>
<dbReference type="GO" id="GO:0005829">
    <property type="term" value="C:cytosol"/>
    <property type="evidence" value="ECO:0007669"/>
    <property type="project" value="TreeGrafter"/>
</dbReference>
<dbReference type="GO" id="GO:0016279">
    <property type="term" value="F:protein-lysine N-methyltransferase activity"/>
    <property type="evidence" value="ECO:0007669"/>
    <property type="project" value="TreeGrafter"/>
</dbReference>
<dbReference type="GO" id="GO:0032259">
    <property type="term" value="P:methylation"/>
    <property type="evidence" value="ECO:0007669"/>
    <property type="project" value="UniProtKB-KW"/>
</dbReference>
<dbReference type="CDD" id="cd02440">
    <property type="entry name" value="AdoMet_MTases"/>
    <property type="match status" value="1"/>
</dbReference>
<dbReference type="Gene3D" id="3.40.50.150">
    <property type="entry name" value="Vaccinia Virus protein VP39"/>
    <property type="match status" value="1"/>
</dbReference>
<dbReference type="HAMAP" id="MF_00735">
    <property type="entry name" value="Methyltr_PrmA"/>
    <property type="match status" value="1"/>
</dbReference>
<dbReference type="InterPro" id="IPR050078">
    <property type="entry name" value="Ribosomal_L11_MeTrfase_PrmA"/>
</dbReference>
<dbReference type="InterPro" id="IPR004498">
    <property type="entry name" value="Ribosomal_PrmA_MeTrfase"/>
</dbReference>
<dbReference type="InterPro" id="IPR029063">
    <property type="entry name" value="SAM-dependent_MTases_sf"/>
</dbReference>
<dbReference type="NCBIfam" id="TIGR00406">
    <property type="entry name" value="prmA"/>
    <property type="match status" value="1"/>
</dbReference>
<dbReference type="PANTHER" id="PTHR43648">
    <property type="entry name" value="ELECTRON TRANSFER FLAVOPROTEIN BETA SUBUNIT LYSINE METHYLTRANSFERASE"/>
    <property type="match status" value="1"/>
</dbReference>
<dbReference type="PANTHER" id="PTHR43648:SF1">
    <property type="entry name" value="ELECTRON TRANSFER FLAVOPROTEIN BETA SUBUNIT LYSINE METHYLTRANSFERASE"/>
    <property type="match status" value="1"/>
</dbReference>
<dbReference type="Pfam" id="PF06325">
    <property type="entry name" value="PrmA"/>
    <property type="match status" value="1"/>
</dbReference>
<dbReference type="PIRSF" id="PIRSF000401">
    <property type="entry name" value="RPL11_MTase"/>
    <property type="match status" value="1"/>
</dbReference>
<dbReference type="SUPFAM" id="SSF53335">
    <property type="entry name" value="S-adenosyl-L-methionine-dependent methyltransferases"/>
    <property type="match status" value="1"/>
</dbReference>
<keyword id="KW-0963">Cytoplasm</keyword>
<keyword id="KW-0489">Methyltransferase</keyword>
<keyword id="KW-0949">S-adenosyl-L-methionine</keyword>
<keyword id="KW-0808">Transferase</keyword>
<accession>B4E5V2</accession>
<protein>
    <recommendedName>
        <fullName evidence="1">Ribosomal protein L11 methyltransferase</fullName>
        <shortName evidence="1">L11 Mtase</shortName>
        <ecNumber evidence="1">2.1.1.-</ecNumber>
    </recommendedName>
</protein>
<name>PRMA_BURCJ</name>
<evidence type="ECO:0000255" key="1">
    <source>
        <dbReference type="HAMAP-Rule" id="MF_00735"/>
    </source>
</evidence>
<proteinExistence type="inferred from homology"/>
<gene>
    <name evidence="1" type="primary">prmA</name>
    <name type="ordered locus">BceJ2315_33600</name>
    <name type="ORF">BCAL3422</name>
</gene>
<organism>
    <name type="scientific">Burkholderia cenocepacia (strain ATCC BAA-245 / DSM 16553 / LMG 16656 / NCTC 13227 / J2315 / CF5610)</name>
    <name type="common">Burkholderia cepacia (strain J2315)</name>
    <dbReference type="NCBI Taxonomy" id="216591"/>
    <lineage>
        <taxon>Bacteria</taxon>
        <taxon>Pseudomonadati</taxon>
        <taxon>Pseudomonadota</taxon>
        <taxon>Betaproteobacteria</taxon>
        <taxon>Burkholderiales</taxon>
        <taxon>Burkholderiaceae</taxon>
        <taxon>Burkholderia</taxon>
        <taxon>Burkholderia cepacia complex</taxon>
    </lineage>
</organism>
<feature type="chain" id="PRO_1000192591" description="Ribosomal protein L11 methyltransferase">
    <location>
        <begin position="1"/>
        <end position="300"/>
    </location>
</feature>
<feature type="binding site" evidence="1">
    <location>
        <position position="152"/>
    </location>
    <ligand>
        <name>S-adenosyl-L-methionine</name>
        <dbReference type="ChEBI" id="CHEBI:59789"/>
    </ligand>
</feature>
<feature type="binding site" evidence="1">
    <location>
        <position position="173"/>
    </location>
    <ligand>
        <name>S-adenosyl-L-methionine</name>
        <dbReference type="ChEBI" id="CHEBI:59789"/>
    </ligand>
</feature>
<feature type="binding site" evidence="1">
    <location>
        <position position="195"/>
    </location>
    <ligand>
        <name>S-adenosyl-L-methionine</name>
        <dbReference type="ChEBI" id="CHEBI:59789"/>
    </ligand>
</feature>
<feature type="binding site" evidence="1">
    <location>
        <position position="234"/>
    </location>
    <ligand>
        <name>S-adenosyl-L-methionine</name>
        <dbReference type="ChEBI" id="CHEBI:59789"/>
    </ligand>
</feature>
<sequence>MSYRELVVELAREHAEALSDALLDLGALSVSVEDADADTPDEQPLFGEPGLVPDRTAWQHSRVVALLSADHEPAVLLAAATNEIGLAETPQFVVREVEEQDWVRLTQSQFEPIPIGERIWVVPSWHDAPDPDALVLELDPGLAFGTGSHPTTRLCMEWLEQSVKPGQSVLDYGCGSGILAILAKKCGANPVIGIDIDPQAVESARQNSERNRAEVTYGLPDACPDGEFDIVVANILSNPLKLMASMLASKVKPGGRIALSGVLARQADEVAAVYARYVDISVWREHEGWVCLAGTRRESH</sequence>
<reference key="1">
    <citation type="journal article" date="2009" name="J. Bacteriol.">
        <title>The genome of Burkholderia cenocepacia J2315, an epidemic pathogen of cystic fibrosis patients.</title>
        <authorList>
            <person name="Holden M.T."/>
            <person name="Seth-Smith H.M."/>
            <person name="Crossman L.C."/>
            <person name="Sebaihia M."/>
            <person name="Bentley S.D."/>
            <person name="Cerdeno-Tarraga A.M."/>
            <person name="Thomson N.R."/>
            <person name="Bason N."/>
            <person name="Quail M.A."/>
            <person name="Sharp S."/>
            <person name="Cherevach I."/>
            <person name="Churcher C."/>
            <person name="Goodhead I."/>
            <person name="Hauser H."/>
            <person name="Holroyd N."/>
            <person name="Mungall K."/>
            <person name="Scott P."/>
            <person name="Walker D."/>
            <person name="White B."/>
            <person name="Rose H."/>
            <person name="Iversen P."/>
            <person name="Mil-Homens D."/>
            <person name="Rocha E.P."/>
            <person name="Fialho A.M."/>
            <person name="Baldwin A."/>
            <person name="Dowson C."/>
            <person name="Barrell B.G."/>
            <person name="Govan J.R."/>
            <person name="Vandamme P."/>
            <person name="Hart C.A."/>
            <person name="Mahenthiralingam E."/>
            <person name="Parkhill J."/>
        </authorList>
    </citation>
    <scope>NUCLEOTIDE SEQUENCE [LARGE SCALE GENOMIC DNA]</scope>
    <source>
        <strain>ATCC BAA-245 / DSM 16553 / LMG 16656 / NCTC 13227 / J2315 / CF5610</strain>
    </source>
</reference>